<evidence type="ECO:0000250" key="1">
    <source>
        <dbReference type="UniProtKB" id="Q9NVA1"/>
    </source>
</evidence>
<evidence type="ECO:0000269" key="2">
    <source>
    </source>
</evidence>
<evidence type="ECO:0000305" key="3"/>
<evidence type="ECO:0000312" key="4">
    <source>
        <dbReference type="EMBL" id="AAF50633.1"/>
    </source>
</evidence>
<evidence type="ECO:0000312" key="5">
    <source>
        <dbReference type="EMBL" id="AAL49261.1"/>
    </source>
</evidence>
<evidence type="ECO:0000312" key="6">
    <source>
        <dbReference type="FlyBase" id="FBgn0035722"/>
    </source>
</evidence>
<evidence type="ECO:0000312" key="7">
    <source>
        <dbReference type="Proteomes" id="UP000000803"/>
    </source>
</evidence>
<proteinExistence type="evidence at protein level"/>
<accession>Q9VRZ7</accession>
<gene>
    <name evidence="6" type="primary">Uqcc1</name>
    <name evidence="4" type="synonym">Dmel\CG10075</name>
    <name evidence="6" type="ORF">CG10075</name>
    <name evidence="4" type="ORF">Dmel_CG10075</name>
</gene>
<organism evidence="7">
    <name type="scientific">Drosophila melanogaster</name>
    <name type="common">Fruit fly</name>
    <dbReference type="NCBI Taxonomy" id="7227"/>
    <lineage>
        <taxon>Eukaryota</taxon>
        <taxon>Metazoa</taxon>
        <taxon>Ecdysozoa</taxon>
        <taxon>Arthropoda</taxon>
        <taxon>Hexapoda</taxon>
        <taxon>Insecta</taxon>
        <taxon>Pterygota</taxon>
        <taxon>Neoptera</taxon>
        <taxon>Endopterygota</taxon>
        <taxon>Diptera</taxon>
        <taxon>Brachycera</taxon>
        <taxon>Muscomorpha</taxon>
        <taxon>Ephydroidea</taxon>
        <taxon>Drosophilidae</taxon>
        <taxon>Drosophila</taxon>
        <taxon>Sophophora</taxon>
    </lineage>
</organism>
<feature type="chain" id="PRO_0000460644" description="Ubiquinol-cytochrome c reductase complex assembly factor 1">
    <location>
        <begin position="1"/>
        <end position="259"/>
    </location>
</feature>
<reference evidence="7" key="1">
    <citation type="journal article" date="2000" name="Science">
        <title>The genome sequence of Drosophila melanogaster.</title>
        <authorList>
            <person name="Adams M.D."/>
            <person name="Celniker S.E."/>
            <person name="Holt R.A."/>
            <person name="Evans C.A."/>
            <person name="Gocayne J.D."/>
            <person name="Amanatides P.G."/>
            <person name="Scherer S.E."/>
            <person name="Li P.W."/>
            <person name="Hoskins R.A."/>
            <person name="Galle R.F."/>
            <person name="George R.A."/>
            <person name="Lewis S.E."/>
            <person name="Richards S."/>
            <person name="Ashburner M."/>
            <person name="Henderson S.N."/>
            <person name="Sutton G.G."/>
            <person name="Wortman J.R."/>
            <person name="Yandell M.D."/>
            <person name="Zhang Q."/>
            <person name="Chen L.X."/>
            <person name="Brandon R.C."/>
            <person name="Rogers Y.-H.C."/>
            <person name="Blazej R.G."/>
            <person name="Champe M."/>
            <person name="Pfeiffer B.D."/>
            <person name="Wan K.H."/>
            <person name="Doyle C."/>
            <person name="Baxter E.G."/>
            <person name="Helt G."/>
            <person name="Nelson C.R."/>
            <person name="Miklos G.L.G."/>
            <person name="Abril J.F."/>
            <person name="Agbayani A."/>
            <person name="An H.-J."/>
            <person name="Andrews-Pfannkoch C."/>
            <person name="Baldwin D."/>
            <person name="Ballew R.M."/>
            <person name="Basu A."/>
            <person name="Baxendale J."/>
            <person name="Bayraktaroglu L."/>
            <person name="Beasley E.M."/>
            <person name="Beeson K.Y."/>
            <person name="Benos P.V."/>
            <person name="Berman B.P."/>
            <person name="Bhandari D."/>
            <person name="Bolshakov S."/>
            <person name="Borkova D."/>
            <person name="Botchan M.R."/>
            <person name="Bouck J."/>
            <person name="Brokstein P."/>
            <person name="Brottier P."/>
            <person name="Burtis K.C."/>
            <person name="Busam D.A."/>
            <person name="Butler H."/>
            <person name="Cadieu E."/>
            <person name="Center A."/>
            <person name="Chandra I."/>
            <person name="Cherry J.M."/>
            <person name="Cawley S."/>
            <person name="Dahlke C."/>
            <person name="Davenport L.B."/>
            <person name="Davies P."/>
            <person name="de Pablos B."/>
            <person name="Delcher A."/>
            <person name="Deng Z."/>
            <person name="Mays A.D."/>
            <person name="Dew I."/>
            <person name="Dietz S.M."/>
            <person name="Dodson K."/>
            <person name="Doup L.E."/>
            <person name="Downes M."/>
            <person name="Dugan-Rocha S."/>
            <person name="Dunkov B.C."/>
            <person name="Dunn P."/>
            <person name="Durbin K.J."/>
            <person name="Evangelista C.C."/>
            <person name="Ferraz C."/>
            <person name="Ferriera S."/>
            <person name="Fleischmann W."/>
            <person name="Fosler C."/>
            <person name="Gabrielian A.E."/>
            <person name="Garg N.S."/>
            <person name="Gelbart W.M."/>
            <person name="Glasser K."/>
            <person name="Glodek A."/>
            <person name="Gong F."/>
            <person name="Gorrell J.H."/>
            <person name="Gu Z."/>
            <person name="Guan P."/>
            <person name="Harris M."/>
            <person name="Harris N.L."/>
            <person name="Harvey D.A."/>
            <person name="Heiman T.J."/>
            <person name="Hernandez J.R."/>
            <person name="Houck J."/>
            <person name="Hostin D."/>
            <person name="Houston K.A."/>
            <person name="Howland T.J."/>
            <person name="Wei M.-H."/>
            <person name="Ibegwam C."/>
            <person name="Jalali M."/>
            <person name="Kalush F."/>
            <person name="Karpen G.H."/>
            <person name="Ke Z."/>
            <person name="Kennison J.A."/>
            <person name="Ketchum K.A."/>
            <person name="Kimmel B.E."/>
            <person name="Kodira C.D."/>
            <person name="Kraft C.L."/>
            <person name="Kravitz S."/>
            <person name="Kulp D."/>
            <person name="Lai Z."/>
            <person name="Lasko P."/>
            <person name="Lei Y."/>
            <person name="Levitsky A.A."/>
            <person name="Li J.H."/>
            <person name="Li Z."/>
            <person name="Liang Y."/>
            <person name="Lin X."/>
            <person name="Liu X."/>
            <person name="Mattei B."/>
            <person name="McIntosh T.C."/>
            <person name="McLeod M.P."/>
            <person name="McPherson D."/>
            <person name="Merkulov G."/>
            <person name="Milshina N.V."/>
            <person name="Mobarry C."/>
            <person name="Morris J."/>
            <person name="Moshrefi A."/>
            <person name="Mount S.M."/>
            <person name="Moy M."/>
            <person name="Murphy B."/>
            <person name="Murphy L."/>
            <person name="Muzny D.M."/>
            <person name="Nelson D.L."/>
            <person name="Nelson D.R."/>
            <person name="Nelson K.A."/>
            <person name="Nixon K."/>
            <person name="Nusskern D.R."/>
            <person name="Pacleb J.M."/>
            <person name="Palazzolo M."/>
            <person name="Pittman G.S."/>
            <person name="Pan S."/>
            <person name="Pollard J."/>
            <person name="Puri V."/>
            <person name="Reese M.G."/>
            <person name="Reinert K."/>
            <person name="Remington K."/>
            <person name="Saunders R.D.C."/>
            <person name="Scheeler F."/>
            <person name="Shen H."/>
            <person name="Shue B.C."/>
            <person name="Siden-Kiamos I."/>
            <person name="Simpson M."/>
            <person name="Skupski M.P."/>
            <person name="Smith T.J."/>
            <person name="Spier E."/>
            <person name="Spradling A.C."/>
            <person name="Stapleton M."/>
            <person name="Strong R."/>
            <person name="Sun E."/>
            <person name="Svirskas R."/>
            <person name="Tector C."/>
            <person name="Turner R."/>
            <person name="Venter E."/>
            <person name="Wang A.H."/>
            <person name="Wang X."/>
            <person name="Wang Z.-Y."/>
            <person name="Wassarman D.A."/>
            <person name="Weinstock G.M."/>
            <person name="Weissenbach J."/>
            <person name="Williams S.M."/>
            <person name="Woodage T."/>
            <person name="Worley K.C."/>
            <person name="Wu D."/>
            <person name="Yang S."/>
            <person name="Yao Q.A."/>
            <person name="Ye J."/>
            <person name="Yeh R.-F."/>
            <person name="Zaveri J.S."/>
            <person name="Zhan M."/>
            <person name="Zhang G."/>
            <person name="Zhao Q."/>
            <person name="Zheng L."/>
            <person name="Zheng X.H."/>
            <person name="Zhong F.N."/>
            <person name="Zhong W."/>
            <person name="Zhou X."/>
            <person name="Zhu S.C."/>
            <person name="Zhu X."/>
            <person name="Smith H.O."/>
            <person name="Gibbs R.A."/>
            <person name="Myers E.W."/>
            <person name="Rubin G.M."/>
            <person name="Venter J.C."/>
        </authorList>
    </citation>
    <scope>NUCLEOTIDE SEQUENCE [LARGE SCALE GENOMIC DNA]</scope>
    <source>
        <strain evidence="7">Berkeley</strain>
    </source>
</reference>
<reference evidence="7" key="2">
    <citation type="journal article" date="2002" name="Genome Biol.">
        <title>Annotation of the Drosophila melanogaster euchromatic genome: a systematic review.</title>
        <authorList>
            <person name="Misra S."/>
            <person name="Crosby M.A."/>
            <person name="Mungall C.J."/>
            <person name="Matthews B.B."/>
            <person name="Campbell K.S."/>
            <person name="Hradecky P."/>
            <person name="Huang Y."/>
            <person name="Kaminker J.S."/>
            <person name="Millburn G.H."/>
            <person name="Prochnik S.E."/>
            <person name="Smith C.D."/>
            <person name="Tupy J.L."/>
            <person name="Whitfield E.J."/>
            <person name="Bayraktaroglu L."/>
            <person name="Berman B.P."/>
            <person name="Bettencourt B.R."/>
            <person name="Celniker S.E."/>
            <person name="de Grey A.D.N.J."/>
            <person name="Drysdale R.A."/>
            <person name="Harris N.L."/>
            <person name="Richter J."/>
            <person name="Russo S."/>
            <person name="Schroeder A.J."/>
            <person name="Shu S.Q."/>
            <person name="Stapleton M."/>
            <person name="Yamada C."/>
            <person name="Ashburner M."/>
            <person name="Gelbart W.M."/>
            <person name="Rubin G.M."/>
            <person name="Lewis S.E."/>
        </authorList>
    </citation>
    <scope>GENOME REANNOTATION</scope>
    <source>
        <strain evidence="7">Berkeley</strain>
    </source>
</reference>
<reference evidence="5" key="3">
    <citation type="journal article" date="2002" name="Genome Biol.">
        <title>A Drosophila full-length cDNA resource.</title>
        <authorList>
            <person name="Stapleton M."/>
            <person name="Carlson J.W."/>
            <person name="Brokstein P."/>
            <person name="Yu C."/>
            <person name="Champe M."/>
            <person name="George R.A."/>
            <person name="Guarin H."/>
            <person name="Kronmiller B."/>
            <person name="Pacleb J.M."/>
            <person name="Park S."/>
            <person name="Wan K.H."/>
            <person name="Rubin G.M."/>
            <person name="Celniker S.E."/>
        </authorList>
    </citation>
    <scope>NUCLEOTIDE SEQUENCE [LARGE SCALE MRNA]</scope>
    <source>
        <strain evidence="5">Berkeley</strain>
        <tissue evidence="5">Embryo</tissue>
    </source>
</reference>
<reference evidence="3" key="4">
    <citation type="journal article" date="2022" name="Elife">
        <title>Two neuronal peptides encoded from a single transcript regulate mitochondrial complex III in Drosophila.</title>
        <authorList>
            <person name="Bosch J.A."/>
            <person name="Ugur B."/>
            <person name="Pichardo-Casas I."/>
            <person name="Rabasco J."/>
            <person name="Escobedo F."/>
            <person name="Zuo Z."/>
            <person name="Brown B."/>
            <person name="Celniker S."/>
            <person name="Sinclair D.A."/>
            <person name="Bellen H.J."/>
            <person name="Perrimon N."/>
        </authorList>
    </citation>
    <scope>INTERACTION WITH SLOTH1</scope>
</reference>
<dbReference type="EMBL" id="AE014296">
    <property type="protein sequence ID" value="AAF50633.1"/>
    <property type="molecule type" value="Genomic_DNA"/>
</dbReference>
<dbReference type="EMBL" id="AY071639">
    <property type="protein sequence ID" value="AAL49261.1"/>
    <property type="molecule type" value="mRNA"/>
</dbReference>
<dbReference type="RefSeq" id="NP_648064.1">
    <property type="nucleotide sequence ID" value="NM_139807.4"/>
</dbReference>
<dbReference type="SMR" id="Q9VRZ7"/>
<dbReference type="FunCoup" id="Q9VRZ7">
    <property type="interactions" value="786"/>
</dbReference>
<dbReference type="IntAct" id="Q9VRZ7">
    <property type="interactions" value="1"/>
</dbReference>
<dbReference type="STRING" id="7227.FBpp0076648"/>
<dbReference type="SwissPalm" id="Q9VRZ7"/>
<dbReference type="PaxDb" id="7227-FBpp0076648"/>
<dbReference type="DNASU" id="38758"/>
<dbReference type="EnsemblMetazoa" id="FBtr0076939">
    <property type="protein sequence ID" value="FBpp0076648"/>
    <property type="gene ID" value="FBgn0035722"/>
</dbReference>
<dbReference type="GeneID" id="38758"/>
<dbReference type="KEGG" id="dme:Dmel_CG10075"/>
<dbReference type="UCSC" id="CG10075-RA">
    <property type="organism name" value="d. melanogaster"/>
</dbReference>
<dbReference type="AGR" id="FB:FBgn0035722"/>
<dbReference type="CTD" id="55245"/>
<dbReference type="FlyBase" id="FBgn0035722">
    <property type="gene designation" value="Uqcc1"/>
</dbReference>
<dbReference type="VEuPathDB" id="VectorBase:FBgn0035722"/>
<dbReference type="eggNOG" id="KOG2873">
    <property type="taxonomic scope" value="Eukaryota"/>
</dbReference>
<dbReference type="GeneTree" id="ENSGT00390000018118"/>
<dbReference type="HOGENOM" id="CLU_051390_4_0_1"/>
<dbReference type="OMA" id="TWFLITE"/>
<dbReference type="OrthoDB" id="4007at2759"/>
<dbReference type="BioGRID-ORCS" id="38758">
    <property type="hits" value="0 hits in 1 CRISPR screen"/>
</dbReference>
<dbReference type="GenomeRNAi" id="38758"/>
<dbReference type="Proteomes" id="UP000000803">
    <property type="component" value="Chromosome 3L"/>
</dbReference>
<dbReference type="Bgee" id="FBgn0035722">
    <property type="expression patterns" value="Expressed in head capsule and 89 other cell types or tissues"/>
</dbReference>
<dbReference type="GO" id="GO:0005743">
    <property type="term" value="C:mitochondrial inner membrane"/>
    <property type="evidence" value="ECO:0000250"/>
    <property type="project" value="FlyBase"/>
</dbReference>
<dbReference type="GO" id="GO:0005739">
    <property type="term" value="C:mitochondrion"/>
    <property type="evidence" value="ECO:0000318"/>
    <property type="project" value="GO_Central"/>
</dbReference>
<dbReference type="GO" id="GO:0034551">
    <property type="term" value="P:mitochondrial respiratory chain complex III assembly"/>
    <property type="evidence" value="ECO:0000250"/>
    <property type="project" value="FlyBase"/>
</dbReference>
<dbReference type="InterPro" id="IPR021150">
    <property type="entry name" value="Ubiq_cyt_c_chap"/>
</dbReference>
<dbReference type="InterPro" id="IPR007129">
    <property type="entry name" value="Ubiqinol_cyt_c_chaperone_CPB3"/>
</dbReference>
<dbReference type="PANTHER" id="PTHR12184">
    <property type="entry name" value="UBIQUINOL-CYTOCHROME C REDUCTASE COMPLEX ASSEMBLY FACTOR 1 FAMILY MEMBER"/>
    <property type="match status" value="1"/>
</dbReference>
<dbReference type="PANTHER" id="PTHR12184:SF1">
    <property type="entry name" value="UBIQUINOL-CYTOCHROME-C REDUCTASE COMPLEX ASSEMBLY FACTOR 1"/>
    <property type="match status" value="1"/>
</dbReference>
<dbReference type="Pfam" id="PF03981">
    <property type="entry name" value="Ubiq_cyt_C_chap"/>
    <property type="match status" value="1"/>
</dbReference>
<protein>
    <recommendedName>
        <fullName evidence="1">Ubiquinol-cytochrome c reductase complex assembly factor 1</fullName>
    </recommendedName>
</protein>
<comment type="function">
    <text evidence="1">Required for the assembly of the ubiquinol-cytochrome c reductase complex (mitochondrial respiratory chain complex III or cytochrome b-c1 complex). May be involved in cytochrome b translation and/or stability.</text>
</comment>
<comment type="subunit">
    <text evidence="2">Interacts with sloth1; the interaction is probably involved in the assembly and stability of the mitochondrial ubiquinol-cytochrome c reductase complex.</text>
</comment>
<comment type="subcellular location">
    <subcellularLocation>
        <location evidence="1">Mitochondrion inner membrane</location>
    </subcellularLocation>
</comment>
<comment type="similarity">
    <text evidence="3">Belongs to the CBP3 family.</text>
</comment>
<keyword id="KW-0472">Membrane</keyword>
<keyword id="KW-0496">Mitochondrion</keyword>
<keyword id="KW-0999">Mitochondrion inner membrane</keyword>
<keyword id="KW-1185">Reference proteome</keyword>
<sequence>MQCTRAVARLAGGLARTAWATQHTYKHRPAILGLLEQPCRLCSSTGVVDNTNKTKPGTAEAAEGGILKRVLNKVGFTPNTKARLKVTSHLLYESVADKINYVTFFRDFNLPNTFNSWFLVTELHVWLLLMRSMAEGSETGEDGRFLRNCIVEAMWGDVNTRAKKLGAHNPSRTRQQIETLSEQFQAALIAYDEGIMSDDRVLACALWRRFFEMNCDDYAQIERLVKYVRQQASMLDSLPRDQFIVKPKVAWLELDKCKV</sequence>
<name>UQCC1_DROME</name>